<name>AAAT_BOVIN</name>
<accession>Q95JC7</accession>
<accession>Q08DD9</accession>
<gene>
    <name type="primary">SLC1A5</name>
    <name type="synonym">ASCT2</name>
</gene>
<evidence type="ECO:0000250" key="1">
    <source>
        <dbReference type="UniProtKB" id="D3ZJ25"/>
    </source>
</evidence>
<evidence type="ECO:0000250" key="2">
    <source>
        <dbReference type="UniProtKB" id="O59010"/>
    </source>
</evidence>
<evidence type="ECO:0000250" key="3">
    <source>
        <dbReference type="UniProtKB" id="P43003"/>
    </source>
</evidence>
<evidence type="ECO:0000250" key="4">
    <source>
        <dbReference type="UniProtKB" id="P51912"/>
    </source>
</evidence>
<evidence type="ECO:0000250" key="5">
    <source>
        <dbReference type="UniProtKB" id="Q15758"/>
    </source>
</evidence>
<evidence type="ECO:0000255" key="6"/>
<evidence type="ECO:0000256" key="7">
    <source>
        <dbReference type="SAM" id="MobiDB-lite"/>
    </source>
</evidence>
<evidence type="ECO:0000269" key="8">
    <source>
    </source>
</evidence>
<evidence type="ECO:0000305" key="9"/>
<proteinExistence type="evidence at transcript level"/>
<protein>
    <recommendedName>
        <fullName>Neutral amino acid transporter B(0)</fullName>
        <shortName>ATB(0)</shortName>
    </recommendedName>
    <alternativeName>
        <fullName>Sodium-dependent neutral amino acid transporter type 2</fullName>
    </alternativeName>
    <alternativeName>
        <fullName>Solute carrier family 1 member 5</fullName>
    </alternativeName>
</protein>
<comment type="function">
    <text evidence="1 5 8">Sodium-coupled antiporter of neutral amino acids. In a tri-substrate transport cycle, exchanges neutral amino acids between the extracellular and intracellular compartments, coupled to the inward cotransport of at least one sodium ion (By similarity) (PubMed:11997120). The preferred substrate is the essential amino acid L-glutamine, a precursor for biosynthesis of proteins, nucleotides and amine sugars as well as an alternative fuel for mitochondrial oxidative phosphorylation. Exchanges L-glutamine with other neutral amino acids such as L-serine, L-threonine and L-asparagine in a bidirectional way. Provides L-glutamine to proliferating stem and activated cells driving the metabolic switch toward cell differentiation (By similarity). The transport cycle is usually pH-independent, with the exception of L-glutamate. Transports extracellular L-glutamate coupled to the cotransport of one proton and one sodium ion in exchange for intracellular L-glutamine counter-ion. May provide for L-glutamate uptake in glial cells regulating glutamine/glutamate cycle in the nervous system (By similarity). Can transport D-amino acids. Mediates D-serine release from the retinal glia potentially affecting NMDA receptor function in retinal neurons (By similarity). Displays sodium- and amino acid-dependent but uncoupled channel-like anion conductance with a preference SCN(-) &gt;&gt; NO3(-) &gt; I(-) &gt; Cl(-) (By similarity). Through binding of the fusogenic protein syncytin-1/ERVW-1 may mediate trophoblasts syncytialization, the spontaneous fusion of their plasma membranes, an essential process in placental development (By similarity).</text>
</comment>
<comment type="catalytic activity">
    <reaction evidence="5">
        <text>L-glutamine(out) + L-serine(in) + Na(+)(out) = L-glutamine(in) + L-serine(out) + Na(+)(in)</text>
        <dbReference type="Rhea" id="RHEA:70855"/>
        <dbReference type="ChEBI" id="CHEBI:29101"/>
        <dbReference type="ChEBI" id="CHEBI:33384"/>
        <dbReference type="ChEBI" id="CHEBI:58359"/>
    </reaction>
</comment>
<comment type="catalytic activity">
    <reaction evidence="5">
        <text>L-glutamine(in) + L-serine(out) + Na(+)(out) = L-glutamine(out) + L-serine(in) + Na(+)(in)</text>
        <dbReference type="Rhea" id="RHEA:70887"/>
        <dbReference type="ChEBI" id="CHEBI:29101"/>
        <dbReference type="ChEBI" id="CHEBI:33384"/>
        <dbReference type="ChEBI" id="CHEBI:58359"/>
    </reaction>
</comment>
<comment type="catalytic activity">
    <reaction evidence="5">
        <text>L-threonine(in) + L-glutamine(out) + Na(+)(out) = L-threonine(out) + L-glutamine(in) + Na(+)(in)</text>
        <dbReference type="Rhea" id="RHEA:70863"/>
        <dbReference type="ChEBI" id="CHEBI:29101"/>
        <dbReference type="ChEBI" id="CHEBI:57926"/>
        <dbReference type="ChEBI" id="CHEBI:58359"/>
    </reaction>
</comment>
<comment type="catalytic activity">
    <reaction evidence="5">
        <text>L-threonine(out) + L-glutamine(in) + Na(+)(out) = L-threonine(in) + L-glutamine(out) + Na(+)(in)</text>
        <dbReference type="Rhea" id="RHEA:70879"/>
        <dbReference type="ChEBI" id="CHEBI:29101"/>
        <dbReference type="ChEBI" id="CHEBI:57926"/>
        <dbReference type="ChEBI" id="CHEBI:58359"/>
    </reaction>
</comment>
<comment type="catalytic activity">
    <reaction evidence="5">
        <text>L-asparagine(in) + L-glutamine(out) + Na(+)(out) = L-asparagine(out) + L-glutamine(in) + Na(+)(in)</text>
        <dbReference type="Rhea" id="RHEA:70859"/>
        <dbReference type="ChEBI" id="CHEBI:29101"/>
        <dbReference type="ChEBI" id="CHEBI:58048"/>
        <dbReference type="ChEBI" id="CHEBI:58359"/>
    </reaction>
</comment>
<comment type="catalytic activity">
    <reaction evidence="5">
        <text>L-asparagine(out) + L-glutamine(in) + Na(+)(out) = L-asparagine(in) + L-glutamine(out) + Na(+)(in)</text>
        <dbReference type="Rhea" id="RHEA:70891"/>
        <dbReference type="ChEBI" id="CHEBI:29101"/>
        <dbReference type="ChEBI" id="CHEBI:58048"/>
        <dbReference type="ChEBI" id="CHEBI:58359"/>
    </reaction>
</comment>
<comment type="catalytic activity">
    <reaction evidence="5">
        <text>L-glutamine(in) + L-alanine(out) + Na(+)(out) = L-glutamine(out) + L-alanine(in) + Na(+)(in)</text>
        <dbReference type="Rhea" id="RHEA:70867"/>
        <dbReference type="ChEBI" id="CHEBI:29101"/>
        <dbReference type="ChEBI" id="CHEBI:57972"/>
        <dbReference type="ChEBI" id="CHEBI:58359"/>
    </reaction>
</comment>
<comment type="catalytic activity">
    <reaction evidence="5">
        <text>L-valine(out) + L-glutamine(in) + Na(+)(out) = L-valine(in) + L-glutamine(out) + Na(+)(in)</text>
        <dbReference type="Rhea" id="RHEA:70871"/>
        <dbReference type="ChEBI" id="CHEBI:29101"/>
        <dbReference type="ChEBI" id="CHEBI:57762"/>
        <dbReference type="ChEBI" id="CHEBI:58359"/>
    </reaction>
</comment>
<comment type="catalytic activity">
    <reaction evidence="5">
        <text>L-glutamine(in) + L-methionine(out) + Na(+)(out) = L-glutamine(out) + L-methionine(in) + Na(+)(in)</text>
        <dbReference type="Rhea" id="RHEA:70875"/>
        <dbReference type="ChEBI" id="CHEBI:29101"/>
        <dbReference type="ChEBI" id="CHEBI:57844"/>
        <dbReference type="ChEBI" id="CHEBI:58359"/>
    </reaction>
</comment>
<comment type="catalytic activity">
    <reaction evidence="5">
        <text>L-glutamine(in) + L-glutamate(out) + Na(+)(out) + H(+)(out) = L-glutamine(out) + L-glutamate(in) + Na(+)(in) + H(+)(in)</text>
        <dbReference type="Rhea" id="RHEA:70883"/>
        <dbReference type="ChEBI" id="CHEBI:15378"/>
        <dbReference type="ChEBI" id="CHEBI:29101"/>
        <dbReference type="ChEBI" id="CHEBI:29985"/>
        <dbReference type="ChEBI" id="CHEBI:58359"/>
    </reaction>
</comment>
<comment type="catalytic activity">
    <reaction evidence="5">
        <text>D-serine(in) + L-glutamine(out) + Na(+)(out) = D-serine(out) + L-glutamine(in) + Na(+)(in)</text>
        <dbReference type="Rhea" id="RHEA:75307"/>
        <dbReference type="ChEBI" id="CHEBI:29101"/>
        <dbReference type="ChEBI" id="CHEBI:35247"/>
        <dbReference type="ChEBI" id="CHEBI:58359"/>
    </reaction>
</comment>
<comment type="catalytic activity">
    <reaction evidence="5">
        <text>D-serine(in) + L-alanine(out) + Na(+)(out) = D-serine(out) + L-alanine(in) + Na(+)(in)</text>
        <dbReference type="Rhea" id="RHEA:75311"/>
        <dbReference type="ChEBI" id="CHEBI:29101"/>
        <dbReference type="ChEBI" id="CHEBI:35247"/>
        <dbReference type="ChEBI" id="CHEBI:57972"/>
    </reaction>
</comment>
<comment type="catalytic activity">
    <reaction evidence="1">
        <text>nitrate(in) = nitrate(out)</text>
        <dbReference type="Rhea" id="RHEA:34923"/>
        <dbReference type="ChEBI" id="CHEBI:17632"/>
    </reaction>
</comment>
<comment type="catalytic activity">
    <reaction evidence="1">
        <text>iodide(out) = iodide(in)</text>
        <dbReference type="Rhea" id="RHEA:66324"/>
        <dbReference type="ChEBI" id="CHEBI:16382"/>
    </reaction>
</comment>
<comment type="catalytic activity">
    <reaction evidence="1">
        <text>thiocyanate(in) = thiocyanate(out)</text>
        <dbReference type="Rhea" id="RHEA:75347"/>
        <dbReference type="ChEBI" id="CHEBI:18022"/>
    </reaction>
</comment>
<comment type="subunit">
    <text evidence="5">Homotrimer.</text>
</comment>
<comment type="subcellular location">
    <subcellularLocation>
        <location evidence="8">Cell membrane</location>
        <topology evidence="5">Multi-pass membrane protein</topology>
    </subcellularLocation>
    <subcellularLocation>
        <location evidence="5">Melanosome</location>
    </subcellularLocation>
</comment>
<comment type="similarity">
    <text evidence="9">Belongs to the dicarboxylate/amino acid:cation symporter (DAACS) (TC 2.A.23) family. SLC1A5 subfamily.</text>
</comment>
<keyword id="KW-0007">Acetylation</keyword>
<keyword id="KW-0029">Amino-acid transport</keyword>
<keyword id="KW-0050">Antiport</keyword>
<keyword id="KW-1003">Cell membrane</keyword>
<keyword id="KW-0325">Glycoprotein</keyword>
<keyword id="KW-0472">Membrane</keyword>
<keyword id="KW-0479">Metal-binding</keyword>
<keyword id="KW-0597">Phosphoprotein</keyword>
<keyword id="KW-1185">Reference proteome</keyword>
<keyword id="KW-0915">Sodium</keyword>
<keyword id="KW-0769">Symport</keyword>
<keyword id="KW-0812">Transmembrane</keyword>
<keyword id="KW-1133">Transmembrane helix</keyword>
<keyword id="KW-0813">Transport</keyword>
<dbReference type="EMBL" id="AY039236">
    <property type="protein sequence ID" value="AAK83490.1"/>
    <property type="molecule type" value="mRNA"/>
</dbReference>
<dbReference type="EMBL" id="BC123803">
    <property type="protein sequence ID" value="AAI23804.1"/>
    <property type="molecule type" value="mRNA"/>
</dbReference>
<dbReference type="RefSeq" id="NP_777026.1">
    <property type="nucleotide sequence ID" value="NM_174601.2"/>
</dbReference>
<dbReference type="SMR" id="Q95JC7"/>
<dbReference type="FunCoup" id="Q95JC7">
    <property type="interactions" value="89"/>
</dbReference>
<dbReference type="STRING" id="9913.ENSBTAP00000018050"/>
<dbReference type="GlyCosmos" id="Q95JC7">
    <property type="glycosylation" value="2 sites, No reported glycans"/>
</dbReference>
<dbReference type="GlyGen" id="Q95JC7">
    <property type="glycosylation" value="2 sites"/>
</dbReference>
<dbReference type="PaxDb" id="9913-ENSBTAP00000018050"/>
<dbReference type="PeptideAtlas" id="Q95JC7"/>
<dbReference type="Ensembl" id="ENSBTAT00000018050.6">
    <property type="protein sequence ID" value="ENSBTAP00000018050.6"/>
    <property type="gene ID" value="ENSBTAG00000013577.7"/>
</dbReference>
<dbReference type="GeneID" id="282355"/>
<dbReference type="KEGG" id="bta:282355"/>
<dbReference type="CTD" id="6510"/>
<dbReference type="VEuPathDB" id="HostDB:ENSBTAG00000013577"/>
<dbReference type="VGNC" id="VGNC:34715">
    <property type="gene designation" value="SLC1A5"/>
</dbReference>
<dbReference type="eggNOG" id="KOG3787">
    <property type="taxonomic scope" value="Eukaryota"/>
</dbReference>
<dbReference type="GeneTree" id="ENSGT00940000159485"/>
<dbReference type="InParanoid" id="Q95JC7"/>
<dbReference type="OMA" id="VGTFYAT"/>
<dbReference type="OrthoDB" id="5877963at2759"/>
<dbReference type="Reactome" id="R-BTA-352230">
    <property type="pathway name" value="Amino acid transport across the plasma membrane"/>
</dbReference>
<dbReference type="Reactome" id="R-BTA-9013149">
    <property type="pathway name" value="RAC1 GTPase cycle"/>
</dbReference>
<dbReference type="Reactome" id="R-BTA-9013406">
    <property type="pathway name" value="RHOQ GTPase cycle"/>
</dbReference>
<dbReference type="Reactome" id="R-BTA-9013407">
    <property type="pathway name" value="RHOH GTPase cycle"/>
</dbReference>
<dbReference type="Reactome" id="R-BTA-9013423">
    <property type="pathway name" value="RAC3 GTPase cycle"/>
</dbReference>
<dbReference type="Proteomes" id="UP000009136">
    <property type="component" value="Chromosome 18"/>
</dbReference>
<dbReference type="Bgee" id="ENSBTAG00000013577">
    <property type="expression patterns" value="Expressed in caput epididymis and 104 other cell types or tissues"/>
</dbReference>
<dbReference type="GO" id="GO:0034451">
    <property type="term" value="C:centriolar satellite"/>
    <property type="evidence" value="ECO:0007669"/>
    <property type="project" value="Ensembl"/>
</dbReference>
<dbReference type="GO" id="GO:0036064">
    <property type="term" value="C:ciliary basal body"/>
    <property type="evidence" value="ECO:0007669"/>
    <property type="project" value="Ensembl"/>
</dbReference>
<dbReference type="GO" id="GO:0042470">
    <property type="term" value="C:melanosome"/>
    <property type="evidence" value="ECO:0007669"/>
    <property type="project" value="UniProtKB-SubCell"/>
</dbReference>
<dbReference type="GO" id="GO:0016020">
    <property type="term" value="C:membrane"/>
    <property type="evidence" value="ECO:0000250"/>
    <property type="project" value="UniProtKB"/>
</dbReference>
<dbReference type="GO" id="GO:0005886">
    <property type="term" value="C:plasma membrane"/>
    <property type="evidence" value="ECO:0000250"/>
    <property type="project" value="UniProtKB"/>
</dbReference>
<dbReference type="GO" id="GO:0015297">
    <property type="term" value="F:antiporter activity"/>
    <property type="evidence" value="ECO:0007669"/>
    <property type="project" value="UniProtKB-KW"/>
</dbReference>
<dbReference type="GO" id="GO:0015183">
    <property type="term" value="F:L-aspartate transmembrane transporter activity"/>
    <property type="evidence" value="ECO:0000318"/>
    <property type="project" value="GO_Central"/>
</dbReference>
<dbReference type="GO" id="GO:0015186">
    <property type="term" value="F:L-glutamine transmembrane transporter activity"/>
    <property type="evidence" value="ECO:0000250"/>
    <property type="project" value="UniProtKB"/>
</dbReference>
<dbReference type="GO" id="GO:0046872">
    <property type="term" value="F:metal ion binding"/>
    <property type="evidence" value="ECO:0007669"/>
    <property type="project" value="UniProtKB-KW"/>
</dbReference>
<dbReference type="GO" id="GO:0015175">
    <property type="term" value="F:neutral L-amino acid transmembrane transporter activity"/>
    <property type="evidence" value="ECO:0000318"/>
    <property type="project" value="GO_Central"/>
</dbReference>
<dbReference type="GO" id="GO:0015293">
    <property type="term" value="F:symporter activity"/>
    <property type="evidence" value="ECO:0007669"/>
    <property type="project" value="UniProtKB-KW"/>
</dbReference>
<dbReference type="GO" id="GO:0030218">
    <property type="term" value="P:erythrocyte differentiation"/>
    <property type="evidence" value="ECO:0007669"/>
    <property type="project" value="Ensembl"/>
</dbReference>
<dbReference type="GO" id="GO:0006868">
    <property type="term" value="P:glutamine transport"/>
    <property type="evidence" value="ECO:0000250"/>
    <property type="project" value="UniProtKB"/>
</dbReference>
<dbReference type="GO" id="GO:0140009">
    <property type="term" value="P:L-aspartate import across plasma membrane"/>
    <property type="evidence" value="ECO:0000318"/>
    <property type="project" value="GO_Central"/>
</dbReference>
<dbReference type="GO" id="GO:0070207">
    <property type="term" value="P:protein homotrimerization"/>
    <property type="evidence" value="ECO:0000250"/>
    <property type="project" value="UniProtKB"/>
</dbReference>
<dbReference type="FunFam" id="1.10.3860.10:FF:000005">
    <property type="entry name" value="Amino acid transporter"/>
    <property type="match status" value="1"/>
</dbReference>
<dbReference type="Gene3D" id="1.10.3860.10">
    <property type="entry name" value="Sodium:dicarboxylate symporter"/>
    <property type="match status" value="1"/>
</dbReference>
<dbReference type="InterPro" id="IPR050746">
    <property type="entry name" value="DAACS"/>
</dbReference>
<dbReference type="InterPro" id="IPR001991">
    <property type="entry name" value="Na-dicarboxylate_symporter"/>
</dbReference>
<dbReference type="InterPro" id="IPR018107">
    <property type="entry name" value="Na-dicarboxylate_symporter_CS"/>
</dbReference>
<dbReference type="InterPro" id="IPR036458">
    <property type="entry name" value="Na:dicarbo_symporter_sf"/>
</dbReference>
<dbReference type="PANTHER" id="PTHR11958:SF19">
    <property type="entry name" value="NEUTRAL AMINO ACID TRANSPORTER B(0)"/>
    <property type="match status" value="1"/>
</dbReference>
<dbReference type="PANTHER" id="PTHR11958">
    <property type="entry name" value="SODIUM/DICARBOXYLATE SYMPORTER-RELATED"/>
    <property type="match status" value="1"/>
</dbReference>
<dbReference type="Pfam" id="PF00375">
    <property type="entry name" value="SDF"/>
    <property type="match status" value="1"/>
</dbReference>
<dbReference type="PRINTS" id="PR00173">
    <property type="entry name" value="EDTRNSPORT"/>
</dbReference>
<dbReference type="SUPFAM" id="SSF118215">
    <property type="entry name" value="Proton glutamate symport protein"/>
    <property type="match status" value="1"/>
</dbReference>
<dbReference type="PROSITE" id="PS00713">
    <property type="entry name" value="NA_DICARBOXYL_SYMP_1"/>
    <property type="match status" value="1"/>
</dbReference>
<dbReference type="PROSITE" id="PS00714">
    <property type="entry name" value="NA_DICARBOXYL_SYMP_2"/>
    <property type="match status" value="1"/>
</dbReference>
<sequence>MVADPPKGDPKGYAAAEPTANGVSMLVPIEDVGSLKGGRCGSGDQVRRCLRANLLVLLTVVAVVAGVALGLGVSGAGGAFALGPARLEAFSFPGELLLRLLKMIILPLVVCSLIGGAASLDPSALGRLGAWALLFFLVTTLLASALGVGLALALQPGAAFAAINTSVGAPVEEAPSKEVLDSFLDLVRNIFPSNLVSAAFRSYTTSYKERLFNGTLVKVPTGGEVEGMNILGLVVFAIIFGVALRKLGPEGELLIRFFNSFNDATMVLVSWIMWYAPVGILFLVAGKIVEMENVGLLFASLGKYILCCLLGHAIHGLLTLPLIYFLFARKNPYRFLWGIMTPLATAFGTSSSSATLPLMMKCVEEKNGVARHISRFILPIGATVNMDGAALFQCVAAVFIAQLNHRSLDFVKIITILVTATASSVGAAGIPSGGVLTLAIILEAVNLPVHDISLILAVDWLVDRSCTVLNVEGDAFGAGLLQSYLDRTENCNSVPELIQVKSEMPLAALPVPGEEGNPLLKGCPGPAGDADTCEKESVM</sequence>
<feature type="chain" id="PRO_0000202081" description="Neutral amino acid transporter B(0)">
    <location>
        <begin position="1"/>
        <end position="539"/>
    </location>
</feature>
<feature type="topological domain" description="Cytoplasmic" evidence="9">
    <location>
        <begin position="1"/>
        <end position="52"/>
    </location>
</feature>
<feature type="transmembrane region" description="Helical; Name=1" evidence="3">
    <location>
        <begin position="53"/>
        <end position="82"/>
    </location>
</feature>
<feature type="topological domain" description="Extracellular" evidence="9">
    <location>
        <begin position="83"/>
        <end position="95"/>
    </location>
</feature>
<feature type="transmembrane region" description="Helical; Name=2" evidence="3">
    <location>
        <begin position="96"/>
        <end position="117"/>
    </location>
</feature>
<feature type="topological domain" description="Cytoplasmic" evidence="9">
    <location>
        <begin position="118"/>
        <end position="131"/>
    </location>
</feature>
<feature type="transmembrane region" description="Helical; Name=3" evidence="3">
    <location>
        <begin position="132"/>
        <end position="154"/>
    </location>
</feature>
<feature type="topological domain" description="Extracellular" evidence="9">
    <location>
        <begin position="155"/>
        <end position="223"/>
    </location>
</feature>
<feature type="transmembrane region" description="Helical; Name=4" evidence="3">
    <location>
        <begin position="224"/>
        <end position="247"/>
    </location>
</feature>
<feature type="topological domain" description="Cytoplasmic" evidence="9">
    <location>
        <begin position="248"/>
        <end position="256"/>
    </location>
</feature>
<feature type="transmembrane region" description="Helical; Name=5" evidence="3">
    <location>
        <begin position="257"/>
        <end position="284"/>
    </location>
</feature>
<feature type="topological domain" description="Extracellular" evidence="9">
    <location>
        <begin position="285"/>
        <end position="305"/>
    </location>
</feature>
<feature type="transmembrane region" description="Helical; Name=6" evidence="3">
    <location>
        <begin position="306"/>
        <end position="327"/>
    </location>
</feature>
<feature type="topological domain" description="Cytoplasmic" evidence="9">
    <location>
        <begin position="328"/>
        <end position="332"/>
    </location>
</feature>
<feature type="intramembrane region" description="Discontinuously helical" evidence="3">
    <location>
        <begin position="333"/>
        <end position="363"/>
    </location>
</feature>
<feature type="topological domain" description="Cytoplasmic" evidence="9">
    <location>
        <begin position="364"/>
        <end position="372"/>
    </location>
</feature>
<feature type="transmembrane region" description="Helical; Name=7" evidence="3">
    <location>
        <begin position="373"/>
        <end position="399"/>
    </location>
</feature>
<feature type="topological domain" description="Extracellular" evidence="9">
    <location>
        <begin position="400"/>
        <end position="412"/>
    </location>
</feature>
<feature type="intramembrane region" description="Discontinuously helical" evidence="3">
    <location>
        <begin position="413"/>
        <end position="446"/>
    </location>
</feature>
<feature type="topological domain" description="Extracellular" evidence="9">
    <location>
        <begin position="447"/>
        <end position="459"/>
    </location>
</feature>
<feature type="transmembrane region" description="Helical; Name=8" evidence="3">
    <location>
        <begin position="460"/>
        <end position="481"/>
    </location>
</feature>
<feature type="topological domain" description="Cytoplasmic" evidence="9">
    <location>
        <begin position="482"/>
        <end position="539"/>
    </location>
</feature>
<feature type="region of interest" description="Disordered" evidence="7">
    <location>
        <begin position="518"/>
        <end position="539"/>
    </location>
</feature>
<feature type="binding site" evidence="2">
    <location>
        <position position="381"/>
    </location>
    <ligand>
        <name>Na(+)</name>
        <dbReference type="ChEBI" id="CHEBI:29101"/>
        <label>1</label>
    </ligand>
</feature>
<feature type="binding site" evidence="3">
    <location>
        <position position="383"/>
    </location>
    <ligand>
        <name>Na(+)</name>
        <dbReference type="ChEBI" id="CHEBI:29101"/>
        <label>2</label>
    </ligand>
</feature>
<feature type="binding site" evidence="2">
    <location>
        <position position="385"/>
    </location>
    <ligand>
        <name>Na(+)</name>
        <dbReference type="ChEBI" id="CHEBI:29101"/>
        <label>1</label>
    </ligand>
</feature>
<feature type="binding site" evidence="2">
    <location>
        <position position="470"/>
    </location>
    <ligand>
        <name>Na(+)</name>
        <dbReference type="ChEBI" id="CHEBI:29101"/>
        <label>1</label>
    </ligand>
</feature>
<feature type="binding site" evidence="2">
    <location>
        <position position="474"/>
    </location>
    <ligand>
        <name>Na(+)</name>
        <dbReference type="ChEBI" id="CHEBI:29101"/>
        <label>1</label>
    </ligand>
</feature>
<feature type="modified residue" description="N-acetylmethionine" evidence="5">
    <location>
        <position position="1"/>
    </location>
</feature>
<feature type="modified residue" description="Phosphoserine" evidence="4">
    <location>
        <position position="493"/>
    </location>
</feature>
<feature type="modified residue" description="Phosphoserine" evidence="5">
    <location>
        <position position="502"/>
    </location>
</feature>
<feature type="modified residue" description="Phosphoserine" evidence="5">
    <location>
        <position position="537"/>
    </location>
</feature>
<feature type="glycosylation site" description="N-linked (GlcNAc...) asparagine" evidence="6">
    <location>
        <position position="164"/>
    </location>
</feature>
<feature type="glycosylation site" description="N-linked (GlcNAc...) asparagine" evidence="6">
    <location>
        <position position="213"/>
    </location>
</feature>
<organism>
    <name type="scientific">Bos taurus</name>
    <name type="common">Bovine</name>
    <dbReference type="NCBI Taxonomy" id="9913"/>
    <lineage>
        <taxon>Eukaryota</taxon>
        <taxon>Metazoa</taxon>
        <taxon>Chordata</taxon>
        <taxon>Craniata</taxon>
        <taxon>Vertebrata</taxon>
        <taxon>Euteleostomi</taxon>
        <taxon>Mammalia</taxon>
        <taxon>Eutheria</taxon>
        <taxon>Laurasiatheria</taxon>
        <taxon>Artiodactyla</taxon>
        <taxon>Ruminantia</taxon>
        <taxon>Pecora</taxon>
        <taxon>Bovidae</taxon>
        <taxon>Bovinae</taxon>
        <taxon>Bos</taxon>
    </lineage>
</organism>
<reference key="1">
    <citation type="journal article" date="2002" name="Biochim. Biophys. Acta">
        <title>Characterisation and cloning of a Na(+)-dependent broad-specificity neutral amino acid transporter from NBL-1 cells: a novel member of the ASC/B(0) transporter family.</title>
        <authorList>
            <person name="Pollard M."/>
            <person name="Meredith D."/>
            <person name="McGivan J.D."/>
        </authorList>
    </citation>
    <scope>NUCLEOTIDE SEQUENCE [MRNA]</scope>
    <scope>FUNCTION</scope>
    <scope>SUBCELLULAR LOCATION</scope>
    <source>
        <tissue>Kidney</tissue>
    </source>
</reference>
<reference key="2">
    <citation type="submission" date="2006-09" db="EMBL/GenBank/DDBJ databases">
        <authorList>
            <consortium name="NIH - Mammalian Gene Collection (MGC) project"/>
        </authorList>
    </citation>
    <scope>NUCLEOTIDE SEQUENCE [LARGE SCALE MRNA]</scope>
    <source>
        <strain>Hereford</strain>
        <tissue>Basal ganglia</tissue>
    </source>
</reference>